<dbReference type="EC" id="6.3.2.9" evidence="1"/>
<dbReference type="EMBL" id="BA000019">
    <property type="protein sequence ID" value="BAB75811.1"/>
    <property type="molecule type" value="Genomic_DNA"/>
</dbReference>
<dbReference type="PIR" id="AI2319">
    <property type="entry name" value="AI2319"/>
</dbReference>
<dbReference type="RefSeq" id="WP_010998251.1">
    <property type="nucleotide sequence ID" value="NZ_RSCN01000010.1"/>
</dbReference>
<dbReference type="SMR" id="Q8YPS9"/>
<dbReference type="STRING" id="103690.gene:10496160"/>
<dbReference type="KEGG" id="ana:alr4112"/>
<dbReference type="eggNOG" id="COG0771">
    <property type="taxonomic scope" value="Bacteria"/>
</dbReference>
<dbReference type="OrthoDB" id="9809796at2"/>
<dbReference type="UniPathway" id="UPA00219"/>
<dbReference type="Proteomes" id="UP000002483">
    <property type="component" value="Chromosome"/>
</dbReference>
<dbReference type="GO" id="GO:0005737">
    <property type="term" value="C:cytoplasm"/>
    <property type="evidence" value="ECO:0007669"/>
    <property type="project" value="UniProtKB-SubCell"/>
</dbReference>
<dbReference type="GO" id="GO:0005524">
    <property type="term" value="F:ATP binding"/>
    <property type="evidence" value="ECO:0007669"/>
    <property type="project" value="UniProtKB-UniRule"/>
</dbReference>
<dbReference type="GO" id="GO:0008764">
    <property type="term" value="F:UDP-N-acetylmuramoylalanine-D-glutamate ligase activity"/>
    <property type="evidence" value="ECO:0007669"/>
    <property type="project" value="UniProtKB-UniRule"/>
</dbReference>
<dbReference type="GO" id="GO:0051301">
    <property type="term" value="P:cell division"/>
    <property type="evidence" value="ECO:0007669"/>
    <property type="project" value="UniProtKB-KW"/>
</dbReference>
<dbReference type="GO" id="GO:0071555">
    <property type="term" value="P:cell wall organization"/>
    <property type="evidence" value="ECO:0007669"/>
    <property type="project" value="UniProtKB-KW"/>
</dbReference>
<dbReference type="GO" id="GO:0009252">
    <property type="term" value="P:peptidoglycan biosynthetic process"/>
    <property type="evidence" value="ECO:0007669"/>
    <property type="project" value="UniProtKB-UniRule"/>
</dbReference>
<dbReference type="GO" id="GO:0008360">
    <property type="term" value="P:regulation of cell shape"/>
    <property type="evidence" value="ECO:0007669"/>
    <property type="project" value="UniProtKB-KW"/>
</dbReference>
<dbReference type="Gene3D" id="3.90.190.20">
    <property type="entry name" value="Mur ligase, C-terminal domain"/>
    <property type="match status" value="1"/>
</dbReference>
<dbReference type="Gene3D" id="3.40.1190.10">
    <property type="entry name" value="Mur-like, catalytic domain"/>
    <property type="match status" value="1"/>
</dbReference>
<dbReference type="Gene3D" id="3.40.50.720">
    <property type="entry name" value="NAD(P)-binding Rossmann-like Domain"/>
    <property type="match status" value="1"/>
</dbReference>
<dbReference type="HAMAP" id="MF_00639">
    <property type="entry name" value="MurD"/>
    <property type="match status" value="1"/>
</dbReference>
<dbReference type="InterPro" id="IPR036565">
    <property type="entry name" value="Mur-like_cat_sf"/>
</dbReference>
<dbReference type="InterPro" id="IPR004101">
    <property type="entry name" value="Mur_ligase_C"/>
</dbReference>
<dbReference type="InterPro" id="IPR036615">
    <property type="entry name" value="Mur_ligase_C_dom_sf"/>
</dbReference>
<dbReference type="InterPro" id="IPR013221">
    <property type="entry name" value="Mur_ligase_cen"/>
</dbReference>
<dbReference type="InterPro" id="IPR005762">
    <property type="entry name" value="MurD"/>
</dbReference>
<dbReference type="NCBIfam" id="TIGR01087">
    <property type="entry name" value="murD"/>
    <property type="match status" value="1"/>
</dbReference>
<dbReference type="PANTHER" id="PTHR43692">
    <property type="entry name" value="UDP-N-ACETYLMURAMOYLALANINE--D-GLUTAMATE LIGASE"/>
    <property type="match status" value="1"/>
</dbReference>
<dbReference type="PANTHER" id="PTHR43692:SF1">
    <property type="entry name" value="UDP-N-ACETYLMURAMOYLALANINE--D-GLUTAMATE LIGASE"/>
    <property type="match status" value="1"/>
</dbReference>
<dbReference type="Pfam" id="PF02875">
    <property type="entry name" value="Mur_ligase_C"/>
    <property type="match status" value="1"/>
</dbReference>
<dbReference type="Pfam" id="PF08245">
    <property type="entry name" value="Mur_ligase_M"/>
    <property type="match status" value="1"/>
</dbReference>
<dbReference type="Pfam" id="PF21799">
    <property type="entry name" value="MurD-like_N"/>
    <property type="match status" value="1"/>
</dbReference>
<dbReference type="SUPFAM" id="SSF51984">
    <property type="entry name" value="MurCD N-terminal domain"/>
    <property type="match status" value="1"/>
</dbReference>
<dbReference type="SUPFAM" id="SSF53623">
    <property type="entry name" value="MurD-like peptide ligases, catalytic domain"/>
    <property type="match status" value="1"/>
</dbReference>
<dbReference type="SUPFAM" id="SSF53244">
    <property type="entry name" value="MurD-like peptide ligases, peptide-binding domain"/>
    <property type="match status" value="1"/>
</dbReference>
<protein>
    <recommendedName>
        <fullName evidence="1">UDP-N-acetylmuramoylalanine--D-glutamate ligase</fullName>
        <ecNumber evidence="1">6.3.2.9</ecNumber>
    </recommendedName>
    <alternativeName>
        <fullName evidence="1">D-glutamic acid-adding enzyme</fullName>
    </alternativeName>
    <alternativeName>
        <fullName evidence="1">UDP-N-acetylmuramoyl-L-alanyl-D-glutamate synthetase</fullName>
    </alternativeName>
</protein>
<name>MURD_NOSS1</name>
<organism>
    <name type="scientific">Nostoc sp. (strain PCC 7120 / SAG 25.82 / UTEX 2576)</name>
    <dbReference type="NCBI Taxonomy" id="103690"/>
    <lineage>
        <taxon>Bacteria</taxon>
        <taxon>Bacillati</taxon>
        <taxon>Cyanobacteriota</taxon>
        <taxon>Cyanophyceae</taxon>
        <taxon>Nostocales</taxon>
        <taxon>Nostocaceae</taxon>
        <taxon>Nostoc</taxon>
    </lineage>
</organism>
<accession>Q8YPS9</accession>
<feature type="chain" id="PRO_0000108955" description="UDP-N-acetylmuramoylalanine--D-glutamate ligase">
    <location>
        <begin position="1"/>
        <end position="462"/>
    </location>
</feature>
<feature type="binding site" evidence="1">
    <location>
        <begin position="112"/>
        <end position="118"/>
    </location>
    <ligand>
        <name>ATP</name>
        <dbReference type="ChEBI" id="CHEBI:30616"/>
    </ligand>
</feature>
<gene>
    <name evidence="1" type="primary">murD</name>
    <name type="ordered locus">alr4112</name>
</gene>
<evidence type="ECO:0000255" key="1">
    <source>
        <dbReference type="HAMAP-Rule" id="MF_00639"/>
    </source>
</evidence>
<comment type="function">
    <text evidence="1">Cell wall formation. Catalyzes the addition of glutamate to the nucleotide precursor UDP-N-acetylmuramoyl-L-alanine (UMA).</text>
</comment>
<comment type="catalytic activity">
    <reaction evidence="1">
        <text>UDP-N-acetyl-alpha-D-muramoyl-L-alanine + D-glutamate + ATP = UDP-N-acetyl-alpha-D-muramoyl-L-alanyl-D-glutamate + ADP + phosphate + H(+)</text>
        <dbReference type="Rhea" id="RHEA:16429"/>
        <dbReference type="ChEBI" id="CHEBI:15378"/>
        <dbReference type="ChEBI" id="CHEBI:29986"/>
        <dbReference type="ChEBI" id="CHEBI:30616"/>
        <dbReference type="ChEBI" id="CHEBI:43474"/>
        <dbReference type="ChEBI" id="CHEBI:83898"/>
        <dbReference type="ChEBI" id="CHEBI:83900"/>
        <dbReference type="ChEBI" id="CHEBI:456216"/>
        <dbReference type="EC" id="6.3.2.9"/>
    </reaction>
</comment>
<comment type="pathway">
    <text evidence="1">Cell wall biogenesis; peptidoglycan biosynthesis.</text>
</comment>
<comment type="subcellular location">
    <subcellularLocation>
        <location evidence="1">Cytoplasm</location>
    </subcellularLocation>
</comment>
<comment type="similarity">
    <text evidence="1">Belongs to the MurCDEF family.</text>
</comment>
<reference key="1">
    <citation type="journal article" date="2001" name="DNA Res.">
        <title>Complete genomic sequence of the filamentous nitrogen-fixing cyanobacterium Anabaena sp. strain PCC 7120.</title>
        <authorList>
            <person name="Kaneko T."/>
            <person name="Nakamura Y."/>
            <person name="Wolk C.P."/>
            <person name="Kuritz T."/>
            <person name="Sasamoto S."/>
            <person name="Watanabe A."/>
            <person name="Iriguchi M."/>
            <person name="Ishikawa A."/>
            <person name="Kawashima K."/>
            <person name="Kimura T."/>
            <person name="Kishida Y."/>
            <person name="Kohara M."/>
            <person name="Matsumoto M."/>
            <person name="Matsuno A."/>
            <person name="Muraki A."/>
            <person name="Nakazaki N."/>
            <person name="Shimpo S."/>
            <person name="Sugimoto M."/>
            <person name="Takazawa M."/>
            <person name="Yamada M."/>
            <person name="Yasuda M."/>
            <person name="Tabata S."/>
        </authorList>
    </citation>
    <scope>NUCLEOTIDE SEQUENCE [LARGE SCALE GENOMIC DNA]</scope>
    <source>
        <strain>PCC 7120 / SAG 25.82 / UTEX 2576</strain>
    </source>
</reference>
<keyword id="KW-0067">ATP-binding</keyword>
<keyword id="KW-0131">Cell cycle</keyword>
<keyword id="KW-0132">Cell division</keyword>
<keyword id="KW-0133">Cell shape</keyword>
<keyword id="KW-0961">Cell wall biogenesis/degradation</keyword>
<keyword id="KW-0963">Cytoplasm</keyword>
<keyword id="KW-0436">Ligase</keyword>
<keyword id="KW-0547">Nucleotide-binding</keyword>
<keyword id="KW-0573">Peptidoglycan synthesis</keyword>
<keyword id="KW-1185">Reference proteome</keyword>
<proteinExistence type="inferred from homology"/>
<sequence length="462" mass="50314">MSKAHVVGLGKSGVAAARLLKREGWEVVLSDSNTSDTLLKQQQELAKEQITVELGYSLDFAGALPDLIIVSPGVPWDIPDLVKARDLGIETIGEMELAWRHLKSLPWVGITGTNGKTTTTALIAAIFQAAGFDAPACGNIGYAACEVALAEIPPDWIIGEMSSYQIESSVTLAPHISIWTTFTPDHLARHKTLENYYDIKAKLLRQSHLQVFNGDDAYLSKIGASHWPDAYWTSVQGKESLLGEKGFYIEDGWVVEQLPNSPPQRIVEASALRMVGAHNLQNLLMAVAAARLADISPNAIDKAVREFPGVAHRLEHICTWEGIDFINDSKATNYDAAEVGLASVKSPVVLIAGGEAKPGDDTAWLAKIQAQTSAVLLIGSAAPAFAQRLKEVGYTHYEIVETMEKAVRRSLELAKHHQAPVVLLSPACASFDQYPNFEARGDHFRELCLELVGEKETNSNHH</sequence>